<feature type="chain" id="PRO_0000351429" description="Cell polarity protein mod5">
    <location>
        <begin position="1"/>
        <end position="522"/>
    </location>
</feature>
<feature type="region of interest" description="Disordered" evidence="1">
    <location>
        <begin position="1"/>
        <end position="83"/>
    </location>
</feature>
<feature type="region of interest" description="Disordered" evidence="1">
    <location>
        <begin position="119"/>
        <end position="158"/>
    </location>
</feature>
<feature type="region of interest" description="Disordered" evidence="1">
    <location>
        <begin position="170"/>
        <end position="192"/>
    </location>
</feature>
<feature type="region of interest" description="Disordered" evidence="1">
    <location>
        <begin position="251"/>
        <end position="285"/>
    </location>
</feature>
<feature type="region of interest" description="Disordered" evidence="1">
    <location>
        <begin position="300"/>
        <end position="516"/>
    </location>
</feature>
<feature type="compositionally biased region" description="Polar residues" evidence="1">
    <location>
        <begin position="27"/>
        <end position="46"/>
    </location>
</feature>
<feature type="compositionally biased region" description="Polar residues" evidence="1">
    <location>
        <begin position="66"/>
        <end position="76"/>
    </location>
</feature>
<feature type="compositionally biased region" description="Polar residues" evidence="1">
    <location>
        <begin position="131"/>
        <end position="146"/>
    </location>
</feature>
<feature type="compositionally biased region" description="Low complexity" evidence="1">
    <location>
        <begin position="258"/>
        <end position="285"/>
    </location>
</feature>
<feature type="compositionally biased region" description="Basic and acidic residues" evidence="1">
    <location>
        <begin position="308"/>
        <end position="318"/>
    </location>
</feature>
<feature type="compositionally biased region" description="Polar residues" evidence="1">
    <location>
        <begin position="335"/>
        <end position="349"/>
    </location>
</feature>
<feature type="compositionally biased region" description="Polar residues" evidence="1">
    <location>
        <begin position="363"/>
        <end position="396"/>
    </location>
</feature>
<feature type="compositionally biased region" description="Polar residues" evidence="1">
    <location>
        <begin position="404"/>
        <end position="431"/>
    </location>
</feature>
<feature type="compositionally biased region" description="Low complexity" evidence="1">
    <location>
        <begin position="439"/>
        <end position="452"/>
    </location>
</feature>
<feature type="compositionally biased region" description="Basic and acidic residues" evidence="1">
    <location>
        <begin position="472"/>
        <end position="482"/>
    </location>
</feature>
<feature type="compositionally biased region" description="Basic and acidic residues" evidence="1">
    <location>
        <begin position="495"/>
        <end position="516"/>
    </location>
</feature>
<feature type="modified residue" description="Phosphoserine" evidence="4">
    <location>
        <position position="43"/>
    </location>
</feature>
<feature type="modified residue" description="Phosphoserine" evidence="4">
    <location>
        <position position="303"/>
    </location>
</feature>
<feature type="modified residue" description="Phosphoserine" evidence="4">
    <location>
        <position position="350"/>
    </location>
</feature>
<feature type="mutagenesis site" description="Prevents normal localization at the cell tips." evidence="2">
    <original>C</original>
    <variation>S</variation>
    <location>
        <position position="519"/>
    </location>
</feature>
<sequence>MSALSESPAIPSFWRPETSEISKKPRPNTTVGFQFDNRNVGTSAPSTPAIRRNNTDSFERGLSLPLPSSKQDTGSSVLDPDGDAYVNRYARPVTAGSIYIPSNYHKSFSPNTFSGFNVKRSASKSPKRSANGSTSEDISIEGSPSETAKGARSSFNSNFRTFDIGSERRRRILEASQDSSRPGRYSYRTKSASPALIDTSTLDSRLNFTMGRLERSIAQLSKNTMRAVSHLENPPKDITLPKLNVKNSAWPLQPYSPPANETPASSSSSAKARPVSVPDMSSPVPASSVEYESLKAAVTYSPSQNPKKVAETDSESRKSSFQSSYNDADRPFQVGAQTQSTPNRISRSDSPIVYDVDTHSEDNASTASSEAISQSMRSFQPQPNTGSPFPRFTSTNTEDEQESDIPQSDANDSTVNLNQPNYANLTPTPQVSPKRPTYSRSSPLPSASVPALGDGSPDPPAAPSIQNSLSVHESEMPPHVTRDYTQPAASATPVPKEKPSEKSEKPPKKKGSKLEKFCCILM</sequence>
<reference key="1">
    <citation type="journal article" date="2002" name="Nature">
        <title>The genome sequence of Schizosaccharomyces pombe.</title>
        <authorList>
            <person name="Wood V."/>
            <person name="Gwilliam R."/>
            <person name="Rajandream M.A."/>
            <person name="Lyne M.H."/>
            <person name="Lyne R."/>
            <person name="Stewart A."/>
            <person name="Sgouros J.G."/>
            <person name="Peat N."/>
            <person name="Hayles J."/>
            <person name="Baker S.G."/>
            <person name="Basham D."/>
            <person name="Bowman S."/>
            <person name="Brooks K."/>
            <person name="Brown D."/>
            <person name="Brown S."/>
            <person name="Chillingworth T."/>
            <person name="Churcher C.M."/>
            <person name="Collins M."/>
            <person name="Connor R."/>
            <person name="Cronin A."/>
            <person name="Davis P."/>
            <person name="Feltwell T."/>
            <person name="Fraser A."/>
            <person name="Gentles S."/>
            <person name="Goble A."/>
            <person name="Hamlin N."/>
            <person name="Harris D.E."/>
            <person name="Hidalgo J."/>
            <person name="Hodgson G."/>
            <person name="Holroyd S."/>
            <person name="Hornsby T."/>
            <person name="Howarth S."/>
            <person name="Huckle E.J."/>
            <person name="Hunt S."/>
            <person name="Jagels K."/>
            <person name="James K.D."/>
            <person name="Jones L."/>
            <person name="Jones M."/>
            <person name="Leather S."/>
            <person name="McDonald S."/>
            <person name="McLean J."/>
            <person name="Mooney P."/>
            <person name="Moule S."/>
            <person name="Mungall K.L."/>
            <person name="Murphy L.D."/>
            <person name="Niblett D."/>
            <person name="Odell C."/>
            <person name="Oliver K."/>
            <person name="O'Neil S."/>
            <person name="Pearson D."/>
            <person name="Quail M.A."/>
            <person name="Rabbinowitsch E."/>
            <person name="Rutherford K.M."/>
            <person name="Rutter S."/>
            <person name="Saunders D."/>
            <person name="Seeger K."/>
            <person name="Sharp S."/>
            <person name="Skelton J."/>
            <person name="Simmonds M.N."/>
            <person name="Squares R."/>
            <person name="Squares S."/>
            <person name="Stevens K."/>
            <person name="Taylor K."/>
            <person name="Taylor R.G."/>
            <person name="Tivey A."/>
            <person name="Walsh S.V."/>
            <person name="Warren T."/>
            <person name="Whitehead S."/>
            <person name="Woodward J.R."/>
            <person name="Volckaert G."/>
            <person name="Aert R."/>
            <person name="Robben J."/>
            <person name="Grymonprez B."/>
            <person name="Weltjens I."/>
            <person name="Vanstreels E."/>
            <person name="Rieger M."/>
            <person name="Schaefer M."/>
            <person name="Mueller-Auer S."/>
            <person name="Gabel C."/>
            <person name="Fuchs M."/>
            <person name="Duesterhoeft A."/>
            <person name="Fritzc C."/>
            <person name="Holzer E."/>
            <person name="Moestl D."/>
            <person name="Hilbert H."/>
            <person name="Borzym K."/>
            <person name="Langer I."/>
            <person name="Beck A."/>
            <person name="Lehrach H."/>
            <person name="Reinhardt R."/>
            <person name="Pohl T.M."/>
            <person name="Eger P."/>
            <person name="Zimmermann W."/>
            <person name="Wedler H."/>
            <person name="Wambutt R."/>
            <person name="Purnelle B."/>
            <person name="Goffeau A."/>
            <person name="Cadieu E."/>
            <person name="Dreano S."/>
            <person name="Gloux S."/>
            <person name="Lelaure V."/>
            <person name="Mottier S."/>
            <person name="Galibert F."/>
            <person name="Aves S.J."/>
            <person name="Xiang Z."/>
            <person name="Hunt C."/>
            <person name="Moore K."/>
            <person name="Hurst S.M."/>
            <person name="Lucas M."/>
            <person name="Rochet M."/>
            <person name="Gaillardin C."/>
            <person name="Tallada V.A."/>
            <person name="Garzon A."/>
            <person name="Thode G."/>
            <person name="Daga R.R."/>
            <person name="Cruzado L."/>
            <person name="Jimenez J."/>
            <person name="Sanchez M."/>
            <person name="del Rey F."/>
            <person name="Benito J."/>
            <person name="Dominguez A."/>
            <person name="Revuelta J.L."/>
            <person name="Moreno S."/>
            <person name="Armstrong J."/>
            <person name="Forsburg S.L."/>
            <person name="Cerutti L."/>
            <person name="Lowe T."/>
            <person name="McCombie W.R."/>
            <person name="Paulsen I."/>
            <person name="Potashkin J."/>
            <person name="Shpakovski G.V."/>
            <person name="Ussery D."/>
            <person name="Barrell B.G."/>
            <person name="Nurse P."/>
        </authorList>
    </citation>
    <scope>NUCLEOTIDE SEQUENCE [LARGE SCALE GENOMIC DNA]</scope>
    <source>
        <strain>972 / ATCC 24843</strain>
    </source>
</reference>
<reference key="2">
    <citation type="journal article" date="2003" name="Nature">
        <title>Fission yeast mod5p regulates polarized growth through anchoring of tea1p at cell tips.</title>
        <authorList>
            <person name="Snaith H.A."/>
            <person name="Sawin K.E."/>
        </authorList>
    </citation>
    <scope>FUNCTION</scope>
    <scope>SUBCELLULAR LOCATION</scope>
    <scope>MUTAGENESIS OF CYS-519</scope>
</reference>
<reference key="3">
    <citation type="journal article" date="2005" name="EMBO J.">
        <title>Multistep and multimode cortical anchoring of tea1p at cell tips in fission yeast.</title>
        <authorList>
            <person name="Snaith H.A."/>
            <person name="Samejima I."/>
            <person name="Sawin K.E."/>
        </authorList>
    </citation>
    <scope>FUNCTION</scope>
    <scope>INTERACTION WITH TEA1 AND TEA3</scope>
</reference>
<reference key="4">
    <citation type="journal article" date="2008" name="J. Proteome Res.">
        <title>Phosphoproteome analysis of fission yeast.</title>
        <authorList>
            <person name="Wilson-Grady J.T."/>
            <person name="Villen J."/>
            <person name="Gygi S.P."/>
        </authorList>
    </citation>
    <scope>PHOSPHORYLATION [LARGE SCALE ANALYSIS] AT SER-43; SER-303 AND SER-350</scope>
    <scope>IDENTIFICATION BY MASS SPECTROMETRY</scope>
</reference>
<keyword id="KW-1003">Cell membrane</keyword>
<keyword id="KW-0472">Membrane</keyword>
<keyword id="KW-0597">Phosphoprotein</keyword>
<keyword id="KW-1185">Reference proteome</keyword>
<dbReference type="EMBL" id="CU329671">
    <property type="protein sequence ID" value="CAA19170.1"/>
    <property type="molecule type" value="Genomic_DNA"/>
</dbReference>
<dbReference type="PIR" id="T40520">
    <property type="entry name" value="T40520"/>
</dbReference>
<dbReference type="RefSeq" id="NP_595317.1">
    <property type="nucleotide sequence ID" value="NM_001021224.2"/>
</dbReference>
<dbReference type="BioGRID" id="277410">
    <property type="interactions" value="14"/>
</dbReference>
<dbReference type="FunCoup" id="O59740">
    <property type="interactions" value="2"/>
</dbReference>
<dbReference type="IntAct" id="O59740">
    <property type="interactions" value="2"/>
</dbReference>
<dbReference type="STRING" id="284812.O59740"/>
<dbReference type="iPTMnet" id="O59740"/>
<dbReference type="PaxDb" id="4896-SPBC530.04.1"/>
<dbReference type="EnsemblFungi" id="SPBC530.04.1">
    <property type="protein sequence ID" value="SPBC530.04.1:pep"/>
    <property type="gene ID" value="SPBC530.04"/>
</dbReference>
<dbReference type="GeneID" id="2540894"/>
<dbReference type="KEGG" id="spo:2540894"/>
<dbReference type="PomBase" id="SPBC530.04">
    <property type="gene designation" value="mod5"/>
</dbReference>
<dbReference type="VEuPathDB" id="FungiDB:SPBC530.04"/>
<dbReference type="HOGENOM" id="CLU_535461_0_0_1"/>
<dbReference type="InParanoid" id="O59740"/>
<dbReference type="OMA" id="MKSAATY"/>
<dbReference type="PRO" id="PR:O59740"/>
<dbReference type="Proteomes" id="UP000002485">
    <property type="component" value="Chromosome II"/>
</dbReference>
<dbReference type="GO" id="GO:0051285">
    <property type="term" value="C:cell cortex of cell tip"/>
    <property type="evidence" value="ECO:0000314"/>
    <property type="project" value="PomBase"/>
</dbReference>
<dbReference type="GO" id="GO:0032153">
    <property type="term" value="C:cell division site"/>
    <property type="evidence" value="ECO:0000314"/>
    <property type="project" value="PomBase"/>
</dbReference>
<dbReference type="GO" id="GO:0051286">
    <property type="term" value="C:cell tip"/>
    <property type="evidence" value="ECO:0000314"/>
    <property type="project" value="PomBase"/>
</dbReference>
<dbReference type="GO" id="GO:0009898">
    <property type="term" value="C:cytoplasmic side of plasma membrane"/>
    <property type="evidence" value="ECO:0000314"/>
    <property type="project" value="PomBase"/>
</dbReference>
<dbReference type="GO" id="GO:0031520">
    <property type="term" value="C:plasma membrane of cell tip"/>
    <property type="evidence" value="ECO:0000305"/>
    <property type="project" value="PomBase"/>
</dbReference>
<dbReference type="GO" id="GO:0043495">
    <property type="term" value="F:protein-membrane adaptor activity"/>
    <property type="evidence" value="ECO:0000315"/>
    <property type="project" value="PomBase"/>
</dbReference>
<dbReference type="GO" id="GO:0097248">
    <property type="term" value="P:maintenance of protein location in cell cortex of cell tip"/>
    <property type="evidence" value="ECO:0000315"/>
    <property type="project" value="PomBase"/>
</dbReference>
<organism>
    <name type="scientific">Schizosaccharomyces pombe (strain 972 / ATCC 24843)</name>
    <name type="common">Fission yeast</name>
    <dbReference type="NCBI Taxonomy" id="284812"/>
    <lineage>
        <taxon>Eukaryota</taxon>
        <taxon>Fungi</taxon>
        <taxon>Dikarya</taxon>
        <taxon>Ascomycota</taxon>
        <taxon>Taphrinomycotina</taxon>
        <taxon>Schizosaccharomycetes</taxon>
        <taxon>Schizosaccharomycetales</taxon>
        <taxon>Schizosaccharomycetaceae</taxon>
        <taxon>Schizosaccharomyces</taxon>
    </lineage>
</organism>
<proteinExistence type="evidence at protein level"/>
<evidence type="ECO:0000256" key="1">
    <source>
        <dbReference type="SAM" id="MobiDB-lite"/>
    </source>
</evidence>
<evidence type="ECO:0000269" key="2">
    <source>
    </source>
</evidence>
<evidence type="ECO:0000269" key="3">
    <source>
    </source>
</evidence>
<evidence type="ECO:0000269" key="4">
    <source>
    </source>
</evidence>
<protein>
    <recommendedName>
        <fullName>Cell polarity protein mod5</fullName>
    </recommendedName>
    <alternativeName>
        <fullName>Tea1-anchoring protein mod5</fullName>
    </alternativeName>
</protein>
<gene>
    <name type="primary">mod5</name>
    <name type="ORF">SPBC530.04</name>
</gene>
<comment type="function">
    <text evidence="2 3">With tea1, acts in a positive-feedback loop in the microtubule-mediated regulation of cell polarity. Involved in the anchoring of tea1 at the cortex as well as the correct localization of tea3.</text>
</comment>
<comment type="subunit">
    <text evidence="3">Interacts with tea1 and tea3.</text>
</comment>
<comment type="interaction">
    <interactant intactId="EBI-875310">
        <id>O59740</id>
    </interactant>
    <interactant intactId="EBI-875326">
        <id>O14248</id>
        <label>tea3</label>
    </interactant>
    <organismsDiffer>false</organismsDiffer>
    <experiments>3</experiments>
</comment>
<comment type="subcellular location">
    <subcellularLocation>
        <location evidence="2">Cell membrane</location>
        <topology evidence="2">Peripheral membrane protein</topology>
        <orientation evidence="2">Cytoplasmic side</orientation>
    </subcellularLocation>
    <text>localizes to the cell tips.</text>
</comment>
<accession>O59740</accession>
<name>MOD5P_SCHPO</name>